<keyword id="KW-0044">Antibiotic</keyword>
<keyword id="KW-0929">Antimicrobial</keyword>
<keyword id="KW-1015">Disulfide bond</keyword>
<keyword id="KW-0255">Endonuclease</keyword>
<keyword id="KW-0325">Glycoprotein</keyword>
<keyword id="KW-0378">Hydrolase</keyword>
<keyword id="KW-0458">Lysosome</keyword>
<keyword id="KW-0540">Nuclease</keyword>
<keyword id="KW-0964">Secreted</keyword>
<keyword id="KW-0732">Signal</keyword>
<organism>
    <name type="scientific">Pongo pygmaeus</name>
    <name type="common">Bornean orangutan</name>
    <dbReference type="NCBI Taxonomy" id="9600"/>
    <lineage>
        <taxon>Eukaryota</taxon>
        <taxon>Metazoa</taxon>
        <taxon>Chordata</taxon>
        <taxon>Craniata</taxon>
        <taxon>Vertebrata</taxon>
        <taxon>Euteleostomi</taxon>
        <taxon>Mammalia</taxon>
        <taxon>Eutheria</taxon>
        <taxon>Euarchontoglires</taxon>
        <taxon>Primates</taxon>
        <taxon>Haplorrhini</taxon>
        <taxon>Catarrhini</taxon>
        <taxon>Hominidae</taxon>
        <taxon>Pongo</taxon>
    </lineage>
</organism>
<dbReference type="EC" id="3.1.27.-"/>
<dbReference type="EMBL" id="AF037082">
    <property type="protein sequence ID" value="AAB94744.1"/>
    <property type="molecule type" value="Genomic_DNA"/>
</dbReference>
<dbReference type="SMR" id="O46526"/>
<dbReference type="GlyCosmos" id="O46526">
    <property type="glycosylation" value="2 sites, No reported glycans"/>
</dbReference>
<dbReference type="GO" id="GO:0005615">
    <property type="term" value="C:extracellular space"/>
    <property type="evidence" value="ECO:0007669"/>
    <property type="project" value="TreeGrafter"/>
</dbReference>
<dbReference type="GO" id="GO:0005764">
    <property type="term" value="C:lysosome"/>
    <property type="evidence" value="ECO:0007669"/>
    <property type="project" value="UniProtKB-SubCell"/>
</dbReference>
<dbReference type="GO" id="GO:0004519">
    <property type="term" value="F:endonuclease activity"/>
    <property type="evidence" value="ECO:0007669"/>
    <property type="project" value="UniProtKB-KW"/>
</dbReference>
<dbReference type="GO" id="GO:0003676">
    <property type="term" value="F:nucleic acid binding"/>
    <property type="evidence" value="ECO:0007669"/>
    <property type="project" value="InterPro"/>
</dbReference>
<dbReference type="GO" id="GO:0004540">
    <property type="term" value="F:RNA nuclease activity"/>
    <property type="evidence" value="ECO:0007669"/>
    <property type="project" value="TreeGrafter"/>
</dbReference>
<dbReference type="GO" id="GO:0019731">
    <property type="term" value="P:antibacterial humoral response"/>
    <property type="evidence" value="ECO:0007669"/>
    <property type="project" value="TreeGrafter"/>
</dbReference>
<dbReference type="GO" id="GO:0061844">
    <property type="term" value="P:antimicrobial humoral immune response mediated by antimicrobial peptide"/>
    <property type="evidence" value="ECO:0007669"/>
    <property type="project" value="TreeGrafter"/>
</dbReference>
<dbReference type="GO" id="GO:0050829">
    <property type="term" value="P:defense response to Gram-negative bacterium"/>
    <property type="evidence" value="ECO:0007669"/>
    <property type="project" value="TreeGrafter"/>
</dbReference>
<dbReference type="GO" id="GO:0050830">
    <property type="term" value="P:defense response to Gram-positive bacterium"/>
    <property type="evidence" value="ECO:0007669"/>
    <property type="project" value="TreeGrafter"/>
</dbReference>
<dbReference type="GO" id="GO:0045087">
    <property type="term" value="P:innate immune response"/>
    <property type="evidence" value="ECO:0007669"/>
    <property type="project" value="TreeGrafter"/>
</dbReference>
<dbReference type="CDD" id="cd06265">
    <property type="entry name" value="RNase_A_canonical"/>
    <property type="match status" value="1"/>
</dbReference>
<dbReference type="FunFam" id="3.10.130.10:FF:000001">
    <property type="entry name" value="Ribonuclease pancreatic"/>
    <property type="match status" value="1"/>
</dbReference>
<dbReference type="Gene3D" id="3.10.130.10">
    <property type="entry name" value="Ribonuclease A-like domain"/>
    <property type="match status" value="1"/>
</dbReference>
<dbReference type="InterPro" id="IPR001427">
    <property type="entry name" value="RNaseA"/>
</dbReference>
<dbReference type="InterPro" id="IPR036816">
    <property type="entry name" value="RNaseA-like_dom_sf"/>
</dbReference>
<dbReference type="InterPro" id="IPR023411">
    <property type="entry name" value="RNaseA_AS"/>
</dbReference>
<dbReference type="InterPro" id="IPR023412">
    <property type="entry name" value="RNaseA_domain"/>
</dbReference>
<dbReference type="PANTHER" id="PTHR11437">
    <property type="entry name" value="RIBONUCLEASE"/>
    <property type="match status" value="1"/>
</dbReference>
<dbReference type="PANTHER" id="PTHR11437:SF4">
    <property type="entry name" value="RIBONUCLEASE K6"/>
    <property type="match status" value="1"/>
</dbReference>
<dbReference type="Pfam" id="PF00074">
    <property type="entry name" value="RnaseA"/>
    <property type="match status" value="1"/>
</dbReference>
<dbReference type="PRINTS" id="PR00794">
    <property type="entry name" value="RIBONUCLEASE"/>
</dbReference>
<dbReference type="SMART" id="SM00092">
    <property type="entry name" value="RNAse_Pc"/>
    <property type="match status" value="1"/>
</dbReference>
<dbReference type="SUPFAM" id="SSF54076">
    <property type="entry name" value="RNase A-like"/>
    <property type="match status" value="1"/>
</dbReference>
<dbReference type="PROSITE" id="PS00127">
    <property type="entry name" value="RNASE_PANCREATIC"/>
    <property type="match status" value="1"/>
</dbReference>
<gene>
    <name type="primary">RNASE6</name>
</gene>
<protein>
    <recommendedName>
        <fullName>Ribonuclease K6</fullName>
        <shortName>RNase K6</shortName>
        <ecNumber>3.1.27.-</ecNumber>
    </recommendedName>
</protein>
<evidence type="ECO:0000250" key="1"/>
<evidence type="ECO:0000250" key="2">
    <source>
        <dbReference type="UniProtKB" id="Q64438"/>
    </source>
</evidence>
<evidence type="ECO:0000250" key="3">
    <source>
        <dbReference type="UniProtKB" id="Q93091"/>
    </source>
</evidence>
<evidence type="ECO:0000250" key="4">
    <source>
        <dbReference type="UniProtKB" id="Q9H1E1"/>
    </source>
</evidence>
<evidence type="ECO:0000255" key="5"/>
<evidence type="ECO:0000305" key="6"/>
<feature type="signal peptide" evidence="1">
    <location>
        <begin position="1"/>
        <end position="23"/>
    </location>
</feature>
<feature type="chain" id="PRO_0000030897" description="Ribonuclease K6">
    <location>
        <begin position="24"/>
        <end position="150"/>
    </location>
</feature>
<feature type="active site" description="Proton acceptor" evidence="2">
    <location>
        <position position="38"/>
    </location>
</feature>
<feature type="active site" description="Proton donor" evidence="2">
    <location>
        <position position="145"/>
    </location>
</feature>
<feature type="binding site" evidence="1">
    <location>
        <begin position="61"/>
        <end position="65"/>
    </location>
    <ligand>
        <name>substrate</name>
    </ligand>
</feature>
<feature type="binding site" evidence="1">
    <location>
        <position position="86"/>
    </location>
    <ligand>
        <name>substrate</name>
    </ligand>
</feature>
<feature type="binding site" evidence="1">
    <location>
        <position position="105"/>
    </location>
    <ligand>
        <name>substrate</name>
    </ligand>
</feature>
<feature type="site" description="Facilitates cleavage of polynucleotide substrates" evidence="3">
    <location>
        <position position="59"/>
    </location>
</feature>
<feature type="site" description="Critical for catalytic activity" evidence="4">
    <location>
        <position position="61"/>
    </location>
</feature>
<feature type="glycosylation site" description="N-linked (GlcNAc...) asparagine" evidence="5">
    <location>
        <position position="55"/>
    </location>
</feature>
<feature type="glycosylation site" description="N-linked (GlcNAc...) asparagine" evidence="5">
    <location>
        <position position="100"/>
    </location>
</feature>
<feature type="disulfide bond" evidence="3">
    <location>
        <begin position="46"/>
        <end position="104"/>
    </location>
</feature>
<feature type="disulfide bond" evidence="3">
    <location>
        <begin position="60"/>
        <end position="114"/>
    </location>
</feature>
<feature type="disulfide bond" evidence="3">
    <location>
        <begin position="78"/>
        <end position="129"/>
    </location>
</feature>
<feature type="disulfide bond" evidence="3">
    <location>
        <begin position="85"/>
        <end position="92"/>
    </location>
</feature>
<proteinExistence type="inferred from homology"/>
<comment type="function">
    <text evidence="3">Ribonuclease which shows a preference for the pyrimidines uridine and cytosine. Has potent antibacterial activity against a range of Gram-positive and Gram-negative bacteria, including P.aeruginosa, A.baumanii, M.luteus, S.aureus, E.faecalis, E.faecium, S.saprophyticus and E.coli. Causes loss of bacterial membrane integrity, and also promotes agglutination of Gram-negative bacteria. Probably contributes to urinary tract sterility. Bactericidal activity is independent of RNase activity.</text>
</comment>
<comment type="subunit">
    <text evidence="3">Interacts (via N-terminus) with bacterial lipopolysaccharide (LPS).</text>
</comment>
<comment type="subcellular location">
    <subcellularLocation>
        <location evidence="3">Secreted</location>
    </subcellularLocation>
    <subcellularLocation>
        <location evidence="3">Lysosome</location>
    </subcellularLocation>
    <subcellularLocation>
        <location evidence="3">Cytoplasmic granule</location>
    </subcellularLocation>
</comment>
<comment type="similarity">
    <text evidence="6">Belongs to the pancreatic ribonuclease family.</text>
</comment>
<name>RNAS6_PONPY</name>
<reference key="1">
    <citation type="journal article" date="1998" name="Genome Res.">
        <title>Ribonuclease k6: chromosomal mapping and divergent rates of evolution within the RNase A gene superfamily.</title>
        <authorList>
            <person name="Deming M.S."/>
            <person name="Dyer K.D."/>
            <person name="Bankier A.T."/>
            <person name="Piper M.B."/>
            <person name="Dear P.H."/>
            <person name="Rosenberg H.F."/>
        </authorList>
    </citation>
    <scope>NUCLEOTIDE SEQUENCE [GENOMIC DNA]</scope>
</reference>
<sequence>MVLCFPLLLLLLVLWGPVCPLHAWPKRLTKAHWFEIQHIQPSPLQCNRAMSGINNYTQHCKHQNTFLHDSFQNVAAVCDLLSIVCKNRRHNCHQSSKPVNMTDCRLISGKYPQCRYSAAAQYKFFIVACDPPQKSDPRYKLVPVHLDSIL</sequence>
<accession>O46526</accession>